<gene>
    <name evidence="6" type="primary">XKR7</name>
    <name evidence="6" type="synonym">C20orf159</name>
    <name evidence="4" type="synonym">XRG7</name>
</gene>
<feature type="chain" id="PRO_0000190788" description="XK-related protein 7">
    <location>
        <begin position="1"/>
        <end position="579"/>
    </location>
</feature>
<feature type="transmembrane region" description="Helical" evidence="2">
    <location>
        <begin position="59"/>
        <end position="79"/>
    </location>
</feature>
<feature type="transmembrane region" description="Helical" evidence="2">
    <location>
        <begin position="89"/>
        <end position="109"/>
    </location>
</feature>
<feature type="transmembrane region" description="Helical" evidence="2">
    <location>
        <begin position="260"/>
        <end position="280"/>
    </location>
</feature>
<feature type="transmembrane region" description="Helical" evidence="2">
    <location>
        <begin position="314"/>
        <end position="334"/>
    </location>
</feature>
<feature type="transmembrane region" description="Helical" evidence="2">
    <location>
        <begin position="355"/>
        <end position="375"/>
    </location>
</feature>
<feature type="transmembrane region" description="Helical" evidence="2">
    <location>
        <begin position="384"/>
        <end position="404"/>
    </location>
</feature>
<feature type="transmembrane region" description="Helical" evidence="2">
    <location>
        <begin position="415"/>
        <end position="435"/>
    </location>
</feature>
<feature type="region of interest" description="Disordered" evidence="3">
    <location>
        <begin position="1"/>
        <end position="40"/>
    </location>
</feature>
<feature type="region of interest" description="Disordered" evidence="3">
    <location>
        <begin position="146"/>
        <end position="165"/>
    </location>
</feature>
<feature type="region of interest" description="Disordered" evidence="3">
    <location>
        <begin position="466"/>
        <end position="510"/>
    </location>
</feature>
<feature type="compositionally biased region" description="Low complexity" evidence="3">
    <location>
        <begin position="1"/>
        <end position="18"/>
    </location>
</feature>
<feature type="compositionally biased region" description="Gly residues" evidence="3">
    <location>
        <begin position="19"/>
        <end position="31"/>
    </location>
</feature>
<sequence>MAAKSDGAAASASPDPEGAAGGARGSAGGRGEAAAAAGPPGVVGAGGPGPRYELRDCCWVLCALLVFFSDGATDLWLAASYYLQNQHTYFSLTLLFVLLPSLVVQLLSFRWFVYDYSEPAGSPGPAVSTKDSVAGGAAISTKDSAGAFRTKEGSPEPGPQPAPSSASAYRRRCCRLCIWLLQTLVHLLQLGQVWRYLRALYLGLQSRWRGERLRRHFYWQMLFESADVSMLRLLETFLRSAPQLVLQLSLLVHRGGAPDLLPALSTSASLVSLAWTLASYQKVLRDSRDDKRPLSYKGAVAQVLWHLFSIAARGLAFALFASVYKLYFGIFIVAHWCVMTFWVIQGETDFCMSKWEEIIYNMVVGIIYIFCWFNVKEGRSRRRMTLYHCIVLLENAALTGFWYSSRNFSTDFYSLIMVCVVASSFALGIFFMCVYYCLLHPNGPMLGPQAPGCIFRKASEPCGPPADAITSPPRSLPRTTGAERDGASAGERAGTPTPPVFQVRPGLPPTPVARTLRTEGPVIRIDLPRKKYPAWDAHFIDRRLRKTILALEYSSPATPRLQYRSVGTSQELLEYETTV</sequence>
<organism>
    <name type="scientific">Homo sapiens</name>
    <name type="common">Human</name>
    <dbReference type="NCBI Taxonomy" id="9606"/>
    <lineage>
        <taxon>Eukaryota</taxon>
        <taxon>Metazoa</taxon>
        <taxon>Chordata</taxon>
        <taxon>Craniata</taxon>
        <taxon>Vertebrata</taxon>
        <taxon>Euteleostomi</taxon>
        <taxon>Mammalia</taxon>
        <taxon>Eutheria</taxon>
        <taxon>Euarchontoglires</taxon>
        <taxon>Primates</taxon>
        <taxon>Haplorrhini</taxon>
        <taxon>Catarrhini</taxon>
        <taxon>Hominidae</taxon>
        <taxon>Homo</taxon>
    </lineage>
</organism>
<evidence type="ECO:0000250" key="1">
    <source>
        <dbReference type="UniProtKB" id="Q5GH64"/>
    </source>
</evidence>
<evidence type="ECO:0000255" key="2"/>
<evidence type="ECO:0000256" key="3">
    <source>
        <dbReference type="SAM" id="MobiDB-lite"/>
    </source>
</evidence>
<evidence type="ECO:0000303" key="4">
    <source ref="1"/>
</evidence>
<evidence type="ECO:0000305" key="5"/>
<evidence type="ECO:0000312" key="6">
    <source>
        <dbReference type="HGNC" id="HGNC:23062"/>
    </source>
</evidence>
<accession>Q5GH72</accession>
<accession>Q9NUG5</accession>
<protein>
    <recommendedName>
        <fullName evidence="5">XK-related protein 7</fullName>
    </recommendedName>
</protein>
<dbReference type="EMBL" id="AY534245">
    <property type="protein sequence ID" value="AAT07094.1"/>
    <property type="molecule type" value="mRNA"/>
</dbReference>
<dbReference type="EMBL" id="AL031658">
    <property type="status" value="NOT_ANNOTATED_CDS"/>
    <property type="molecule type" value="Genomic_DNA"/>
</dbReference>
<dbReference type="CCDS" id="CCDS33459.1"/>
<dbReference type="RefSeq" id="NP_001011718.1">
    <property type="nucleotide sequence ID" value="NM_001011718.2"/>
</dbReference>
<dbReference type="SMR" id="Q5GH72"/>
<dbReference type="BioGRID" id="131270">
    <property type="interactions" value="1"/>
</dbReference>
<dbReference type="FunCoup" id="Q5GH72">
    <property type="interactions" value="618"/>
</dbReference>
<dbReference type="IntAct" id="Q5GH72">
    <property type="interactions" value="2"/>
</dbReference>
<dbReference type="STRING" id="9606.ENSP00000477059"/>
<dbReference type="GlyGen" id="Q5GH72">
    <property type="glycosylation" value="2 sites"/>
</dbReference>
<dbReference type="iPTMnet" id="Q5GH72"/>
<dbReference type="PhosphoSitePlus" id="Q5GH72"/>
<dbReference type="SwissPalm" id="Q5GH72"/>
<dbReference type="BioMuta" id="XKR7"/>
<dbReference type="DMDM" id="74707816"/>
<dbReference type="jPOST" id="Q5GH72"/>
<dbReference type="MassIVE" id="Q5GH72"/>
<dbReference type="PaxDb" id="9606-ENSP00000477059"/>
<dbReference type="PeptideAtlas" id="Q5GH72"/>
<dbReference type="ProteomicsDB" id="62831"/>
<dbReference type="Antibodypedia" id="71557">
    <property type="antibodies" value="20 antibodies from 11 providers"/>
</dbReference>
<dbReference type="DNASU" id="343702"/>
<dbReference type="Ensembl" id="ENST00000562532.3">
    <property type="protein sequence ID" value="ENSP00000477059.1"/>
    <property type="gene ID" value="ENSG00000260903.3"/>
</dbReference>
<dbReference type="GeneID" id="343702"/>
<dbReference type="KEGG" id="hsa:343702"/>
<dbReference type="MANE-Select" id="ENST00000562532.3">
    <property type="protein sequence ID" value="ENSP00000477059.1"/>
    <property type="RefSeq nucleotide sequence ID" value="NM_001011718.2"/>
    <property type="RefSeq protein sequence ID" value="NP_001011718.1"/>
</dbReference>
<dbReference type="UCSC" id="uc002wxe.4">
    <property type="organism name" value="human"/>
</dbReference>
<dbReference type="AGR" id="HGNC:23062"/>
<dbReference type="CTD" id="343702"/>
<dbReference type="DisGeNET" id="343702"/>
<dbReference type="GeneCards" id="XKR7"/>
<dbReference type="HGNC" id="HGNC:23062">
    <property type="gene designation" value="XKR7"/>
</dbReference>
<dbReference type="HPA" id="ENSG00000260903">
    <property type="expression patterns" value="Group enriched (brain, pituitary gland, retina)"/>
</dbReference>
<dbReference type="neXtProt" id="NX_Q5GH72"/>
<dbReference type="OpenTargets" id="ENSG00000260903"/>
<dbReference type="PharmGKB" id="PA142670565"/>
<dbReference type="VEuPathDB" id="HostDB:ENSG00000260903"/>
<dbReference type="eggNOG" id="KOG4790">
    <property type="taxonomic scope" value="Eukaryota"/>
</dbReference>
<dbReference type="GeneTree" id="ENSGT01110000267146"/>
<dbReference type="HOGENOM" id="CLU_028534_1_0_1"/>
<dbReference type="InParanoid" id="Q5GH72"/>
<dbReference type="OMA" id="AMVQILW"/>
<dbReference type="OrthoDB" id="6356248at2759"/>
<dbReference type="PAN-GO" id="Q5GH72">
    <property type="GO annotations" value="4 GO annotations based on evolutionary models"/>
</dbReference>
<dbReference type="PhylomeDB" id="Q5GH72"/>
<dbReference type="TreeFam" id="TF316454"/>
<dbReference type="PathwayCommons" id="Q5GH72"/>
<dbReference type="SignaLink" id="Q5GH72"/>
<dbReference type="BioGRID-ORCS" id="343702">
    <property type="hits" value="18 hits in 1138 CRISPR screens"/>
</dbReference>
<dbReference type="GenomeRNAi" id="343702"/>
<dbReference type="Pharos" id="Q5GH72">
    <property type="development level" value="Tdark"/>
</dbReference>
<dbReference type="PRO" id="PR:Q5GH72"/>
<dbReference type="Proteomes" id="UP000005640">
    <property type="component" value="Chromosome 20"/>
</dbReference>
<dbReference type="RNAct" id="Q5GH72">
    <property type="molecule type" value="protein"/>
</dbReference>
<dbReference type="Bgee" id="ENSG00000260903">
    <property type="expression patterns" value="Expressed in cortical plate and 45 other cell types or tissues"/>
</dbReference>
<dbReference type="GO" id="GO:0005886">
    <property type="term" value="C:plasma membrane"/>
    <property type="evidence" value="ECO:0000250"/>
    <property type="project" value="UniProtKB"/>
</dbReference>
<dbReference type="GO" id="GO:1902742">
    <property type="term" value="P:apoptotic process involved in development"/>
    <property type="evidence" value="ECO:0000318"/>
    <property type="project" value="GO_Central"/>
</dbReference>
<dbReference type="GO" id="GO:0043652">
    <property type="term" value="P:engulfment of apoptotic cell"/>
    <property type="evidence" value="ECO:0000318"/>
    <property type="project" value="GO_Central"/>
</dbReference>
<dbReference type="GO" id="GO:0070782">
    <property type="term" value="P:phosphatidylserine exposure on apoptotic cell surface"/>
    <property type="evidence" value="ECO:0000318"/>
    <property type="project" value="GO_Central"/>
</dbReference>
<dbReference type="InterPro" id="IPR018629">
    <property type="entry name" value="XK-rel"/>
</dbReference>
<dbReference type="InterPro" id="IPR050895">
    <property type="entry name" value="XK-related_scramblase"/>
</dbReference>
<dbReference type="PANTHER" id="PTHR16024">
    <property type="entry name" value="XK-RELATED PROTEIN"/>
    <property type="match status" value="1"/>
</dbReference>
<dbReference type="PANTHER" id="PTHR16024:SF7">
    <property type="entry name" value="XK-RELATED PROTEIN 7"/>
    <property type="match status" value="1"/>
</dbReference>
<dbReference type="Pfam" id="PF09815">
    <property type="entry name" value="XK-related"/>
    <property type="match status" value="1"/>
</dbReference>
<keyword id="KW-1003">Cell membrane</keyword>
<keyword id="KW-0472">Membrane</keyword>
<keyword id="KW-1267">Proteomics identification</keyword>
<keyword id="KW-1185">Reference proteome</keyword>
<keyword id="KW-0812">Transmembrane</keyword>
<keyword id="KW-1133">Transmembrane helix</keyword>
<comment type="subcellular location">
    <subcellularLocation>
        <location evidence="1">Cell membrane</location>
        <topology evidence="2">Multi-pass membrane protein</topology>
    </subcellularLocation>
</comment>
<comment type="similarity">
    <text evidence="5">Belongs to the XK family.</text>
</comment>
<proteinExistence type="evidence at protein level"/>
<reference key="1">
    <citation type="submission" date="2004-01" db="EMBL/GenBank/DDBJ databases">
        <title>A superfamily of XK-related genes (XRG) widely expressed in vertebrates and invertebrates.</title>
        <authorList>
            <person name="Huang C.-H."/>
            <person name="Chen Y."/>
        </authorList>
    </citation>
    <scope>NUCLEOTIDE SEQUENCE [MRNA]</scope>
</reference>
<reference key="2">
    <citation type="journal article" date="2001" name="Nature">
        <title>The DNA sequence and comparative analysis of human chromosome 20.</title>
        <authorList>
            <person name="Deloukas P."/>
            <person name="Matthews L.H."/>
            <person name="Ashurst J.L."/>
            <person name="Burton J."/>
            <person name="Gilbert J.G.R."/>
            <person name="Jones M."/>
            <person name="Stavrides G."/>
            <person name="Almeida J.P."/>
            <person name="Babbage A.K."/>
            <person name="Bagguley C.L."/>
            <person name="Bailey J."/>
            <person name="Barlow K.F."/>
            <person name="Bates K.N."/>
            <person name="Beard L.M."/>
            <person name="Beare D.M."/>
            <person name="Beasley O.P."/>
            <person name="Bird C.P."/>
            <person name="Blakey S.E."/>
            <person name="Bridgeman A.M."/>
            <person name="Brown A.J."/>
            <person name="Buck D."/>
            <person name="Burrill W.D."/>
            <person name="Butler A.P."/>
            <person name="Carder C."/>
            <person name="Carter N.P."/>
            <person name="Chapman J.C."/>
            <person name="Clamp M."/>
            <person name="Clark G."/>
            <person name="Clark L.N."/>
            <person name="Clark S.Y."/>
            <person name="Clee C.M."/>
            <person name="Clegg S."/>
            <person name="Cobley V.E."/>
            <person name="Collier R.E."/>
            <person name="Connor R.E."/>
            <person name="Corby N.R."/>
            <person name="Coulson A."/>
            <person name="Coville G.J."/>
            <person name="Deadman R."/>
            <person name="Dhami P.D."/>
            <person name="Dunn M."/>
            <person name="Ellington A.G."/>
            <person name="Frankland J.A."/>
            <person name="Fraser A."/>
            <person name="French L."/>
            <person name="Garner P."/>
            <person name="Grafham D.V."/>
            <person name="Griffiths C."/>
            <person name="Griffiths M.N.D."/>
            <person name="Gwilliam R."/>
            <person name="Hall R.E."/>
            <person name="Hammond S."/>
            <person name="Harley J.L."/>
            <person name="Heath P.D."/>
            <person name="Ho S."/>
            <person name="Holden J.L."/>
            <person name="Howden P.J."/>
            <person name="Huckle E."/>
            <person name="Hunt A.R."/>
            <person name="Hunt S.E."/>
            <person name="Jekosch K."/>
            <person name="Johnson C.M."/>
            <person name="Johnson D."/>
            <person name="Kay M.P."/>
            <person name="Kimberley A.M."/>
            <person name="King A."/>
            <person name="Knights A."/>
            <person name="Laird G.K."/>
            <person name="Lawlor S."/>
            <person name="Lehvaeslaiho M.H."/>
            <person name="Leversha M.A."/>
            <person name="Lloyd C."/>
            <person name="Lloyd D.M."/>
            <person name="Lovell J.D."/>
            <person name="Marsh V.L."/>
            <person name="Martin S.L."/>
            <person name="McConnachie L.J."/>
            <person name="McLay K."/>
            <person name="McMurray A.A."/>
            <person name="Milne S.A."/>
            <person name="Mistry D."/>
            <person name="Moore M.J.F."/>
            <person name="Mullikin J.C."/>
            <person name="Nickerson T."/>
            <person name="Oliver K."/>
            <person name="Parker A."/>
            <person name="Patel R."/>
            <person name="Pearce T.A.V."/>
            <person name="Peck A.I."/>
            <person name="Phillimore B.J.C.T."/>
            <person name="Prathalingam S.R."/>
            <person name="Plumb R.W."/>
            <person name="Ramsay H."/>
            <person name="Rice C.M."/>
            <person name="Ross M.T."/>
            <person name="Scott C.E."/>
            <person name="Sehra H.K."/>
            <person name="Shownkeen R."/>
            <person name="Sims S."/>
            <person name="Skuce C.D."/>
            <person name="Smith M.L."/>
            <person name="Soderlund C."/>
            <person name="Steward C.A."/>
            <person name="Sulston J.E."/>
            <person name="Swann R.M."/>
            <person name="Sycamore N."/>
            <person name="Taylor R."/>
            <person name="Tee L."/>
            <person name="Thomas D.W."/>
            <person name="Thorpe A."/>
            <person name="Tracey A."/>
            <person name="Tromans A.C."/>
            <person name="Vaudin M."/>
            <person name="Wall M."/>
            <person name="Wallis J.M."/>
            <person name="Whitehead S.L."/>
            <person name="Whittaker P."/>
            <person name="Willey D.L."/>
            <person name="Williams L."/>
            <person name="Williams S.A."/>
            <person name="Wilming L."/>
            <person name="Wray P.W."/>
            <person name="Hubbard T."/>
            <person name="Durbin R.M."/>
            <person name="Bentley D.R."/>
            <person name="Beck S."/>
            <person name="Rogers J."/>
        </authorList>
    </citation>
    <scope>NUCLEOTIDE SEQUENCE [LARGE SCALE GENOMIC DNA]</scope>
</reference>
<name>XKR7_HUMAN</name>